<protein>
    <recommendedName>
        <fullName>Genetic interactor of prohibitin 5, mitochondrial</fullName>
    </recommendedName>
    <alternativeName>
        <fullName>Required for respiratory growth protein 5</fullName>
    </alternativeName>
</protein>
<name>GEP5_ZYGRC</name>
<evidence type="ECO:0000250" key="1"/>
<evidence type="ECO:0000305" key="2"/>
<keyword id="KW-0496">Mitochondrion</keyword>
<keyword id="KW-1185">Reference proteome</keyword>
<dbReference type="EMBL" id="CU928175">
    <property type="protein sequence ID" value="CAR26791.1"/>
    <property type="molecule type" value="Genomic_DNA"/>
</dbReference>
<dbReference type="RefSeq" id="XP_002495724.1">
    <property type="nucleotide sequence ID" value="XM_002495679.1"/>
</dbReference>
<dbReference type="FunCoup" id="C5DSN0">
    <property type="interactions" value="35"/>
</dbReference>
<dbReference type="GeneID" id="8202916"/>
<dbReference type="KEGG" id="zro:ZYRO0C01562g"/>
<dbReference type="HOGENOM" id="CLU_079415_0_0_1"/>
<dbReference type="InParanoid" id="C5DSN0"/>
<dbReference type="Proteomes" id="UP000008536">
    <property type="component" value="Chromosome C"/>
</dbReference>
<dbReference type="GO" id="GO:0005739">
    <property type="term" value="C:mitochondrion"/>
    <property type="evidence" value="ECO:0007669"/>
    <property type="project" value="UniProtKB-SubCell"/>
</dbReference>
<dbReference type="GO" id="GO:0000002">
    <property type="term" value="P:mitochondrial genome maintenance"/>
    <property type="evidence" value="ECO:0007669"/>
    <property type="project" value="InterPro"/>
</dbReference>
<dbReference type="InterPro" id="IPR031455">
    <property type="entry name" value="Gep5"/>
</dbReference>
<dbReference type="Pfam" id="PF17053">
    <property type="entry name" value="GEP5"/>
    <property type="match status" value="1"/>
</dbReference>
<feature type="chain" id="PRO_0000399692" description="Genetic interactor of prohibitin 5, mitochondrial">
    <location>
        <begin position="1"/>
        <end position="277"/>
    </location>
</feature>
<sequence>MVSSNLQELIPALSRSIRQLPLHIETQKVLEFYCRNSSYKSLLVAQDISEFEKHNDHKYLEALIQKTHFLWDNPLPPFLKRFQLYHKELTNHWPYEYQRSLLSMSNPRKESQGYLWRDGKELALSNLRFEKHRWADENIIERLSPEQGTQLLHSIFHQYFFLKSHARLCYNNRKIPVPIVEIPLRPMGNDVADCRIRNLFKRKTAVVWNLLAWENRPLSTRNEQLLGEIITKSETRSMRRLYQRASRRAYVVTNEGKDPNGLQVPEFRPGEILQMSI</sequence>
<reference key="1">
    <citation type="journal article" date="2009" name="Genome Res.">
        <title>Comparative genomics of protoploid Saccharomycetaceae.</title>
        <authorList>
            <consortium name="The Genolevures Consortium"/>
            <person name="Souciet J.-L."/>
            <person name="Dujon B."/>
            <person name="Gaillardin C."/>
            <person name="Johnston M."/>
            <person name="Baret P.V."/>
            <person name="Cliften P."/>
            <person name="Sherman D.J."/>
            <person name="Weissenbach J."/>
            <person name="Westhof E."/>
            <person name="Wincker P."/>
            <person name="Jubin C."/>
            <person name="Poulain J."/>
            <person name="Barbe V."/>
            <person name="Segurens B."/>
            <person name="Artiguenave F."/>
            <person name="Anthouard V."/>
            <person name="Vacherie B."/>
            <person name="Val M.-E."/>
            <person name="Fulton R.S."/>
            <person name="Minx P."/>
            <person name="Wilson R."/>
            <person name="Durrens P."/>
            <person name="Jean G."/>
            <person name="Marck C."/>
            <person name="Martin T."/>
            <person name="Nikolski M."/>
            <person name="Rolland T."/>
            <person name="Seret M.-L."/>
            <person name="Casaregola S."/>
            <person name="Despons L."/>
            <person name="Fairhead C."/>
            <person name="Fischer G."/>
            <person name="Lafontaine I."/>
            <person name="Leh V."/>
            <person name="Lemaire M."/>
            <person name="de Montigny J."/>
            <person name="Neuveglise C."/>
            <person name="Thierry A."/>
            <person name="Blanc-Lenfle I."/>
            <person name="Bleykasten C."/>
            <person name="Diffels J."/>
            <person name="Fritsch E."/>
            <person name="Frangeul L."/>
            <person name="Goeffon A."/>
            <person name="Jauniaux N."/>
            <person name="Kachouri-Lafond R."/>
            <person name="Payen C."/>
            <person name="Potier S."/>
            <person name="Pribylova L."/>
            <person name="Ozanne C."/>
            <person name="Richard G.-F."/>
            <person name="Sacerdot C."/>
            <person name="Straub M.-L."/>
            <person name="Talla E."/>
        </authorList>
    </citation>
    <scope>NUCLEOTIDE SEQUENCE [LARGE SCALE GENOMIC DNA]</scope>
    <source>
        <strain>ATCC 2623 / CBS 732 / BCRC 21506 / NBRC 1130 / NCYC 568 / NRRL Y-229</strain>
    </source>
</reference>
<gene>
    <name type="primary">GEP5</name>
    <name type="synonym">RRG5</name>
    <name type="ordered locus">ZYRO0C01562g</name>
</gene>
<organism>
    <name type="scientific">Zygosaccharomyces rouxii (strain ATCC 2623 / CBS 732 / NBRC 1130 / NCYC 568 / NRRL Y-229)</name>
    <dbReference type="NCBI Taxonomy" id="559307"/>
    <lineage>
        <taxon>Eukaryota</taxon>
        <taxon>Fungi</taxon>
        <taxon>Dikarya</taxon>
        <taxon>Ascomycota</taxon>
        <taxon>Saccharomycotina</taxon>
        <taxon>Saccharomycetes</taxon>
        <taxon>Saccharomycetales</taxon>
        <taxon>Saccharomycetaceae</taxon>
        <taxon>Zygosaccharomyces</taxon>
    </lineage>
</organism>
<comment type="function">
    <text evidence="1">Essential for respiratory growth and required for maintenance of mtDNA. Required for cell survival in the absence of prohibitins (By similarity).</text>
</comment>
<comment type="subcellular location">
    <subcellularLocation>
        <location evidence="1">Mitochondrion</location>
    </subcellularLocation>
</comment>
<comment type="similarity">
    <text evidence="2">Belongs to the GEP5 family.</text>
</comment>
<proteinExistence type="inferred from homology"/>
<accession>C5DSN0</accession>